<comment type="function">
    <text evidence="1">Involved in mitochondria homeostasis.</text>
</comment>
<comment type="subcellular location">
    <subcellularLocation>
        <location evidence="1">Mitochondrion inner membrane</location>
        <topology evidence="1">Multi-pass membrane protein</topology>
    </subcellularLocation>
</comment>
<comment type="similarity">
    <text evidence="3">Belongs to the peroxisomal membrane protein PXMP2/4 family.</text>
</comment>
<keyword id="KW-0472">Membrane</keyword>
<keyword id="KW-0496">Mitochondrion</keyword>
<keyword id="KW-0999">Mitochondrion inner membrane</keyword>
<keyword id="KW-1185">Reference proteome</keyword>
<keyword id="KW-0812">Transmembrane</keyword>
<keyword id="KW-1133">Transmembrane helix</keyword>
<name>MPV17_CAEEL</name>
<gene>
    <name evidence="5" type="ORF">T18D3.9</name>
</gene>
<reference key="1">
    <citation type="journal article" date="1998" name="Science">
        <title>Genome sequence of the nematode C. elegans: a platform for investigating biology.</title>
        <authorList>
            <consortium name="The C. elegans sequencing consortium"/>
        </authorList>
    </citation>
    <scope>NUCLEOTIDE SEQUENCE [LARGE SCALE GENOMIC DNA]</scope>
    <source>
        <strain>Bristol N2</strain>
    </source>
</reference>
<protein>
    <recommendedName>
        <fullName evidence="3">Mitochondrial inner membrane protein Mpv17</fullName>
    </recommendedName>
    <alternativeName>
        <fullName evidence="3">Mpv17-like protein</fullName>
    </alternativeName>
</protein>
<sequence>MVIILFIRRRLATNPLSTQMCIAGTISGSGDCLAQYLSHNQEWDRWRTARFSFLSSCFMAPSLFIWFRLLEKVKGNNKSLLLVKKLCIDQLCFSPCFNAAILFNLRLLQHQSAEKSWDLLKEDWFNIYATSLKVWPFVQVVNLCFVPLNYRVILNQVVAFFWNCYLSYITQKPIDHIEQFY</sequence>
<proteinExistence type="inferred from homology"/>
<dbReference type="EMBL" id="Z68119">
    <property type="protein sequence ID" value="CAE17916.1"/>
    <property type="molecule type" value="Genomic_DNA"/>
</dbReference>
<dbReference type="RefSeq" id="NP_001024916.1">
    <property type="nucleotide sequence ID" value="NM_001029745.4"/>
</dbReference>
<dbReference type="FunCoup" id="Q7YWV6">
    <property type="interactions" value="1647"/>
</dbReference>
<dbReference type="STRING" id="6239.T18D3.9.1"/>
<dbReference type="PaxDb" id="6239-T18D3.9"/>
<dbReference type="EnsemblMetazoa" id="T18D3.9.1">
    <property type="protein sequence ID" value="T18D3.9.1"/>
    <property type="gene ID" value="WBGene00011826"/>
</dbReference>
<dbReference type="EnsemblMetazoa" id="T18D3.9.2">
    <property type="protein sequence ID" value="T18D3.9.2"/>
    <property type="gene ID" value="WBGene00011826"/>
</dbReference>
<dbReference type="GeneID" id="3564939"/>
<dbReference type="KEGG" id="cel:CELE_T18D3.9"/>
<dbReference type="UCSC" id="T18D3.9">
    <property type="organism name" value="c. elegans"/>
</dbReference>
<dbReference type="AGR" id="WB:WBGene00011826"/>
<dbReference type="CTD" id="3564939"/>
<dbReference type="WormBase" id="T18D3.9">
    <property type="protein sequence ID" value="CE35017"/>
    <property type="gene ID" value="WBGene00011826"/>
</dbReference>
<dbReference type="eggNOG" id="KOG1944">
    <property type="taxonomic scope" value="Eukaryota"/>
</dbReference>
<dbReference type="GeneTree" id="ENSGT00940000160891"/>
<dbReference type="HOGENOM" id="CLU_049109_8_3_1"/>
<dbReference type="InParanoid" id="Q7YWV6"/>
<dbReference type="OMA" id="CYLLCHY"/>
<dbReference type="OrthoDB" id="430207at2759"/>
<dbReference type="PhylomeDB" id="Q7YWV6"/>
<dbReference type="Reactome" id="R-CEL-9033241">
    <property type="pathway name" value="Peroxisomal protein import"/>
</dbReference>
<dbReference type="PRO" id="PR:Q7YWV6"/>
<dbReference type="Proteomes" id="UP000001940">
    <property type="component" value="Chromosome X"/>
</dbReference>
<dbReference type="Bgee" id="WBGene00011826">
    <property type="expression patterns" value="Expressed in embryo and 3 other cell types or tissues"/>
</dbReference>
<dbReference type="GO" id="GO:0005737">
    <property type="term" value="C:cytoplasm"/>
    <property type="evidence" value="ECO:0000318"/>
    <property type="project" value="GO_Central"/>
</dbReference>
<dbReference type="GO" id="GO:0005743">
    <property type="term" value="C:mitochondrial inner membrane"/>
    <property type="evidence" value="ECO:0007669"/>
    <property type="project" value="UniProtKB-SubCell"/>
</dbReference>
<dbReference type="GO" id="GO:0005739">
    <property type="term" value="C:mitochondrion"/>
    <property type="evidence" value="ECO:0000318"/>
    <property type="project" value="GO_Central"/>
</dbReference>
<dbReference type="GO" id="GO:0015267">
    <property type="term" value="F:channel activity"/>
    <property type="evidence" value="ECO:0000318"/>
    <property type="project" value="GO_Central"/>
</dbReference>
<dbReference type="GO" id="GO:1901858">
    <property type="term" value="P:regulation of mitochondrial DNA metabolic process"/>
    <property type="evidence" value="ECO:0000318"/>
    <property type="project" value="GO_Central"/>
</dbReference>
<dbReference type="InterPro" id="IPR007248">
    <property type="entry name" value="Mpv17_PMP22"/>
</dbReference>
<dbReference type="PANTHER" id="PTHR11266">
    <property type="entry name" value="PEROXISOMAL MEMBRANE PROTEIN 2, PXMP2 MPV17"/>
    <property type="match status" value="1"/>
</dbReference>
<dbReference type="PANTHER" id="PTHR11266:SF17">
    <property type="entry name" value="PROTEIN MPV17"/>
    <property type="match status" value="1"/>
</dbReference>
<dbReference type="Pfam" id="PF04117">
    <property type="entry name" value="Mpv17_PMP22"/>
    <property type="match status" value="1"/>
</dbReference>
<evidence type="ECO:0000250" key="1"/>
<evidence type="ECO:0000255" key="2"/>
<evidence type="ECO:0000305" key="3"/>
<evidence type="ECO:0000312" key="4">
    <source>
        <dbReference type="Proteomes" id="UP000001940"/>
    </source>
</evidence>
<evidence type="ECO:0000312" key="5">
    <source>
        <dbReference type="WormBase" id="T18D3.9"/>
    </source>
</evidence>
<organism evidence="4">
    <name type="scientific">Caenorhabditis elegans</name>
    <dbReference type="NCBI Taxonomy" id="6239"/>
    <lineage>
        <taxon>Eukaryota</taxon>
        <taxon>Metazoa</taxon>
        <taxon>Ecdysozoa</taxon>
        <taxon>Nematoda</taxon>
        <taxon>Chromadorea</taxon>
        <taxon>Rhabditida</taxon>
        <taxon>Rhabditina</taxon>
        <taxon>Rhabditomorpha</taxon>
        <taxon>Rhabditoidea</taxon>
        <taxon>Rhabditidae</taxon>
        <taxon>Peloderinae</taxon>
        <taxon>Caenorhabditis</taxon>
    </lineage>
</organism>
<feature type="chain" id="PRO_0000234403" description="Mitochondrial inner membrane protein Mpv17">
    <location>
        <begin position="1"/>
        <end position="181"/>
    </location>
</feature>
<feature type="transmembrane region" description="Helical" evidence="2">
    <location>
        <begin position="20"/>
        <end position="37"/>
    </location>
</feature>
<feature type="transmembrane region" description="Helical" evidence="2">
    <location>
        <begin position="51"/>
        <end position="67"/>
    </location>
</feature>
<feature type="transmembrane region" description="Helical" evidence="2">
    <location>
        <begin position="86"/>
        <end position="103"/>
    </location>
</feature>
<feature type="transmembrane region" description="Helical" evidence="2">
    <location>
        <begin position="152"/>
        <end position="169"/>
    </location>
</feature>
<accession>Q7YWV6</accession>